<feature type="chain" id="PRO_1000071005" description="SsrA-binding protein">
    <location>
        <begin position="1"/>
        <end position="158"/>
    </location>
</feature>
<sequence length="158" mass="18174">MAKKTKKPSNQIAANKKARHEYFIEETYEAGLVLQGWEVKAIRAGKMSITEAYVVFRGNEAFLFGAHIQPLLSSSTHVDPDSIRTRKLLLNRKEIDTLFGAVNQKGYACVPLEVYWKDSLVKCKIGLAKGKKLHDKRKTLKDRDWERDKERGFKQHLD</sequence>
<accession>A5WH04</accession>
<dbReference type="EMBL" id="CP000713">
    <property type="protein sequence ID" value="ABQ94945.1"/>
    <property type="molecule type" value="Genomic_DNA"/>
</dbReference>
<dbReference type="SMR" id="A5WH04"/>
<dbReference type="STRING" id="349106.PsycPRwf_2005"/>
<dbReference type="KEGG" id="prw:PsycPRwf_2005"/>
<dbReference type="eggNOG" id="COG0691">
    <property type="taxonomic scope" value="Bacteria"/>
</dbReference>
<dbReference type="HOGENOM" id="CLU_108953_3_0_6"/>
<dbReference type="GO" id="GO:0005829">
    <property type="term" value="C:cytosol"/>
    <property type="evidence" value="ECO:0007669"/>
    <property type="project" value="TreeGrafter"/>
</dbReference>
<dbReference type="GO" id="GO:0003723">
    <property type="term" value="F:RNA binding"/>
    <property type="evidence" value="ECO:0007669"/>
    <property type="project" value="UniProtKB-UniRule"/>
</dbReference>
<dbReference type="GO" id="GO:0070929">
    <property type="term" value="P:trans-translation"/>
    <property type="evidence" value="ECO:0007669"/>
    <property type="project" value="UniProtKB-UniRule"/>
</dbReference>
<dbReference type="CDD" id="cd09294">
    <property type="entry name" value="SmpB"/>
    <property type="match status" value="1"/>
</dbReference>
<dbReference type="Gene3D" id="2.40.280.10">
    <property type="match status" value="1"/>
</dbReference>
<dbReference type="HAMAP" id="MF_00023">
    <property type="entry name" value="SmpB"/>
    <property type="match status" value="1"/>
</dbReference>
<dbReference type="InterPro" id="IPR023620">
    <property type="entry name" value="SmpB"/>
</dbReference>
<dbReference type="InterPro" id="IPR000037">
    <property type="entry name" value="SsrA-bd_prot"/>
</dbReference>
<dbReference type="InterPro" id="IPR020081">
    <property type="entry name" value="SsrA-bd_prot_CS"/>
</dbReference>
<dbReference type="NCBIfam" id="NF003843">
    <property type="entry name" value="PRK05422.1"/>
    <property type="match status" value="1"/>
</dbReference>
<dbReference type="NCBIfam" id="TIGR00086">
    <property type="entry name" value="smpB"/>
    <property type="match status" value="1"/>
</dbReference>
<dbReference type="PANTHER" id="PTHR30308:SF2">
    <property type="entry name" value="SSRA-BINDING PROTEIN"/>
    <property type="match status" value="1"/>
</dbReference>
<dbReference type="PANTHER" id="PTHR30308">
    <property type="entry name" value="TMRNA-BINDING COMPONENT OF TRANS-TRANSLATION TAGGING COMPLEX"/>
    <property type="match status" value="1"/>
</dbReference>
<dbReference type="Pfam" id="PF01668">
    <property type="entry name" value="SmpB"/>
    <property type="match status" value="1"/>
</dbReference>
<dbReference type="SUPFAM" id="SSF74982">
    <property type="entry name" value="Small protein B (SmpB)"/>
    <property type="match status" value="1"/>
</dbReference>
<dbReference type="PROSITE" id="PS01317">
    <property type="entry name" value="SSRP"/>
    <property type="match status" value="1"/>
</dbReference>
<protein>
    <recommendedName>
        <fullName evidence="1">SsrA-binding protein</fullName>
    </recommendedName>
    <alternativeName>
        <fullName evidence="1">Small protein B</fullName>
    </alternativeName>
</protein>
<name>SSRP_PSYWF</name>
<keyword id="KW-0963">Cytoplasm</keyword>
<keyword id="KW-0694">RNA-binding</keyword>
<proteinExistence type="inferred from homology"/>
<gene>
    <name evidence="1" type="primary">smpB</name>
    <name type="ordered locus">PsycPRwf_2005</name>
</gene>
<organism>
    <name type="scientific">Psychrobacter sp. (strain PRwf-1)</name>
    <dbReference type="NCBI Taxonomy" id="349106"/>
    <lineage>
        <taxon>Bacteria</taxon>
        <taxon>Pseudomonadati</taxon>
        <taxon>Pseudomonadota</taxon>
        <taxon>Gammaproteobacteria</taxon>
        <taxon>Moraxellales</taxon>
        <taxon>Moraxellaceae</taxon>
        <taxon>Psychrobacter</taxon>
    </lineage>
</organism>
<comment type="function">
    <text evidence="1">Required for rescue of stalled ribosomes mediated by trans-translation. Binds to transfer-messenger RNA (tmRNA), required for stable association of tmRNA with ribosomes. tmRNA and SmpB together mimic tRNA shape, replacing the anticodon stem-loop with SmpB. tmRNA is encoded by the ssrA gene; the 2 termini fold to resemble tRNA(Ala) and it encodes a 'tag peptide', a short internal open reading frame. During trans-translation Ala-aminoacylated tmRNA acts like a tRNA, entering the A-site of stalled ribosomes, displacing the stalled mRNA. The ribosome then switches to translate the ORF on the tmRNA; the nascent peptide is terminated with the 'tag peptide' encoded by the tmRNA and targeted for degradation. The ribosome is freed to recommence translation, which seems to be the essential function of trans-translation.</text>
</comment>
<comment type="subcellular location">
    <subcellularLocation>
        <location evidence="1">Cytoplasm</location>
    </subcellularLocation>
    <text evidence="1">The tmRNA-SmpB complex associates with stalled 70S ribosomes.</text>
</comment>
<comment type="similarity">
    <text evidence="1">Belongs to the SmpB family.</text>
</comment>
<evidence type="ECO:0000255" key="1">
    <source>
        <dbReference type="HAMAP-Rule" id="MF_00023"/>
    </source>
</evidence>
<reference key="1">
    <citation type="submission" date="2007-05" db="EMBL/GenBank/DDBJ databases">
        <title>Complete sequence of chromosome of Psychrobacter sp. PRwf-1.</title>
        <authorList>
            <consortium name="US DOE Joint Genome Institute"/>
            <person name="Copeland A."/>
            <person name="Lucas S."/>
            <person name="Lapidus A."/>
            <person name="Barry K."/>
            <person name="Detter J.C."/>
            <person name="Glavina del Rio T."/>
            <person name="Hammon N."/>
            <person name="Israni S."/>
            <person name="Dalin E."/>
            <person name="Tice H."/>
            <person name="Pitluck S."/>
            <person name="Chain P."/>
            <person name="Malfatti S."/>
            <person name="Shin M."/>
            <person name="Vergez L."/>
            <person name="Schmutz J."/>
            <person name="Larimer F."/>
            <person name="Land M."/>
            <person name="Hauser L."/>
            <person name="Kyrpides N."/>
            <person name="Kim E."/>
            <person name="Tiedje J."/>
            <person name="Richardson P."/>
        </authorList>
    </citation>
    <scope>NUCLEOTIDE SEQUENCE [LARGE SCALE GENOMIC DNA]</scope>
    <source>
        <strain>PRwf-1</strain>
    </source>
</reference>